<comment type="function">
    <text evidence="1">Involved in the biosynthesis of the coenzyme M (2-mercaptoethanesulfonic acid). Catalyzes the decarboxylation of sulfopyruvate to sulfoacetaldehyde.</text>
</comment>
<comment type="catalytic activity">
    <reaction evidence="1">
        <text>3-sulfopyruvate + H(+) = sulfoacetaldehyde + CO2</text>
        <dbReference type="Rhea" id="RHEA:20948"/>
        <dbReference type="ChEBI" id="CHEBI:15378"/>
        <dbReference type="ChEBI" id="CHEBI:16526"/>
        <dbReference type="ChEBI" id="CHEBI:57940"/>
        <dbReference type="ChEBI" id="CHEBI:58246"/>
        <dbReference type="EC" id="4.1.1.79"/>
    </reaction>
</comment>
<comment type="activity regulation">
    <text evidence="1">Inhibited by oxygen when heated in air at 80 degrees Celsius. The enzyme is reactivated by addition of dithionite.</text>
</comment>
<comment type="biophysicochemical properties">
    <kinetics>
        <KM evidence="1">0.64 mM for 3-sulfopyruvate</KM>
        <Vmax evidence="1">52.0 umol/min/mg enzyme</Vmax>
    </kinetics>
</comment>
<comment type="pathway">
    <text evidence="4">Cofactor biosynthesis; coenzyme M biosynthesis; sulfoacetaldehyde from phosphoenolpyruvate and sulfite: step 4/4.</text>
</comment>
<comment type="subunit">
    <text evidence="1">Heterododecamer composed of 6 subunits alpha and 6 subunits beta.</text>
</comment>
<comment type="similarity">
    <text evidence="3">Belongs to the ComD family.</text>
</comment>
<keyword id="KW-0174">Coenzyme M biosynthesis</keyword>
<keyword id="KW-0210">Decarboxylase</keyword>
<keyword id="KW-0456">Lyase</keyword>
<keyword id="KW-1185">Reference proteome</keyword>
<proteinExistence type="evidence at protein level"/>
<dbReference type="EC" id="4.1.1.79" evidence="1"/>
<dbReference type="EMBL" id="L77117">
    <property type="status" value="NOT_ANNOTATED_CDS"/>
    <property type="molecule type" value="Genomic_DNA"/>
</dbReference>
<dbReference type="RefSeq" id="WP_064496437.1">
    <property type="nucleotide sequence ID" value="NC_000909.1"/>
</dbReference>
<dbReference type="SMR" id="P58415"/>
<dbReference type="GeneID" id="27929948"/>
<dbReference type="InParanoid" id="P58415"/>
<dbReference type="OrthoDB" id="53192at2157"/>
<dbReference type="PhylomeDB" id="P58415"/>
<dbReference type="BioCyc" id="MetaCyc:MONOMER-2265"/>
<dbReference type="BRENDA" id="4.1.1.79">
    <property type="organism ID" value="3260"/>
</dbReference>
<dbReference type="SABIO-RK" id="P58415"/>
<dbReference type="UniPathway" id="UPA00355">
    <property type="reaction ID" value="UER00472"/>
</dbReference>
<dbReference type="Proteomes" id="UP000000805">
    <property type="component" value="Chromosome"/>
</dbReference>
<dbReference type="GO" id="GO:0050545">
    <property type="term" value="F:sulfopyruvate decarboxylase activity"/>
    <property type="evidence" value="ECO:0000314"/>
    <property type="project" value="MENGO"/>
</dbReference>
<dbReference type="GO" id="GO:0030976">
    <property type="term" value="F:thiamine pyrophosphate binding"/>
    <property type="evidence" value="ECO:0007669"/>
    <property type="project" value="InterPro"/>
</dbReference>
<dbReference type="GO" id="GO:0019295">
    <property type="term" value="P:coenzyme M biosynthetic process"/>
    <property type="evidence" value="ECO:0000314"/>
    <property type="project" value="UniProtKB"/>
</dbReference>
<dbReference type="CDD" id="cd07035">
    <property type="entry name" value="TPP_PYR_POX_like"/>
    <property type="match status" value="1"/>
</dbReference>
<dbReference type="FunFam" id="3.40.50.970:FF:000039">
    <property type="entry name" value="Indolepyruvate oxidoreductase subunit IorA"/>
    <property type="match status" value="1"/>
</dbReference>
<dbReference type="Gene3D" id="3.40.50.970">
    <property type="match status" value="1"/>
</dbReference>
<dbReference type="InterPro" id="IPR022502">
    <property type="entry name" value="Sulfopyruvate_deCO2ase_alpha"/>
</dbReference>
<dbReference type="InterPro" id="IPR029061">
    <property type="entry name" value="THDP-binding"/>
</dbReference>
<dbReference type="InterPro" id="IPR012001">
    <property type="entry name" value="Thiamin_PyroP_enz_TPP-bd_dom"/>
</dbReference>
<dbReference type="InterPro" id="IPR051818">
    <property type="entry name" value="TPP_dependent_decarboxylase"/>
</dbReference>
<dbReference type="NCBIfam" id="TIGR03845">
    <property type="entry name" value="sulfopyru_alph"/>
    <property type="match status" value="1"/>
</dbReference>
<dbReference type="PANTHER" id="PTHR42818:SF1">
    <property type="entry name" value="SULFOPYRUVATE DECARBOXYLASE"/>
    <property type="match status" value="1"/>
</dbReference>
<dbReference type="PANTHER" id="PTHR42818">
    <property type="entry name" value="SULFOPYRUVATE DECARBOXYLASE SUBUNIT ALPHA"/>
    <property type="match status" value="1"/>
</dbReference>
<dbReference type="Pfam" id="PF02776">
    <property type="entry name" value="TPP_enzyme_N"/>
    <property type="match status" value="1"/>
</dbReference>
<dbReference type="SUPFAM" id="SSF52518">
    <property type="entry name" value="Thiamin diphosphate-binding fold (THDP-binding)"/>
    <property type="match status" value="1"/>
</dbReference>
<sequence>MRGSLAIYNALKDSNIDFICSVPCANLKNLLKLIEEDKNIINIPATREEEAFGICAGAYLAGKKTAILMQNSGIGNSINAIASLYKTFQIPTLLIISHRGDLKEQIPAQIPMGRWIEKLLDVCEIPTYKPKTPEEAYKLIKYASSYMYKISYPVALLFDALYWEYDLEK</sequence>
<feature type="chain" id="PRO_0000090837" description="Sulfopyruvate decarboxylase subunit alpha">
    <location>
        <begin position="1"/>
        <end position="169"/>
    </location>
</feature>
<name>COMD_METJA</name>
<reference key="1">
    <citation type="journal article" date="1996" name="Science">
        <title>Complete genome sequence of the methanogenic archaeon, Methanococcus jannaschii.</title>
        <authorList>
            <person name="Bult C.J."/>
            <person name="White O."/>
            <person name="Olsen G.J."/>
            <person name="Zhou L."/>
            <person name="Fleischmann R.D."/>
            <person name="Sutton G.G."/>
            <person name="Blake J.A."/>
            <person name="FitzGerald L.M."/>
            <person name="Clayton R.A."/>
            <person name="Gocayne J.D."/>
            <person name="Kerlavage A.R."/>
            <person name="Dougherty B.A."/>
            <person name="Tomb J.-F."/>
            <person name="Adams M.D."/>
            <person name="Reich C.I."/>
            <person name="Overbeek R."/>
            <person name="Kirkness E.F."/>
            <person name="Weinstock K.G."/>
            <person name="Merrick J.M."/>
            <person name="Glodek A."/>
            <person name="Scott J.L."/>
            <person name="Geoghagen N.S.M."/>
            <person name="Weidman J.F."/>
            <person name="Fuhrmann J.L."/>
            <person name="Nguyen D."/>
            <person name="Utterback T.R."/>
            <person name="Kelley J.M."/>
            <person name="Peterson J.D."/>
            <person name="Sadow P.W."/>
            <person name="Hanna M.C."/>
            <person name="Cotton M.D."/>
            <person name="Roberts K.M."/>
            <person name="Hurst M.A."/>
            <person name="Kaine B.P."/>
            <person name="Borodovsky M."/>
            <person name="Klenk H.-P."/>
            <person name="Fraser C.M."/>
            <person name="Smith H.O."/>
            <person name="Woese C.R."/>
            <person name="Venter J.C."/>
        </authorList>
    </citation>
    <scope>NUCLEOTIDE SEQUENCE [LARGE SCALE GENOMIC DNA]</scope>
    <source>
        <strain>ATCC 43067 / DSM 2661 / JAL-1 / JCM 10045 / NBRC 100440</strain>
    </source>
</reference>
<reference key="2">
    <citation type="journal article" date="2000" name="J. Bacteriol.">
        <title>Identification of the gene encoding sulfopyruvate decarboxylase, an enzyme involved in biosynthesis of coenzyme M.</title>
        <authorList>
            <person name="Graupner M."/>
            <person name="Xu H."/>
            <person name="White R.H."/>
        </authorList>
    </citation>
    <scope>FUNCTION</scope>
    <scope>CATALYTIC ACTIVITY</scope>
    <scope>BIOPHYSICOCHEMICAL PROPERTIES</scope>
    <scope>ACTIVITY REGULATION</scope>
    <scope>SUBUNIT</scope>
    <source>
        <strain>ATCC 43067 / DSM 2661 / JAL-1 / JCM 10045 / NBRC 100440</strain>
    </source>
</reference>
<evidence type="ECO:0000269" key="1">
    <source>
    </source>
</evidence>
<evidence type="ECO:0000303" key="2">
    <source>
    </source>
</evidence>
<evidence type="ECO:0000305" key="3"/>
<evidence type="ECO:0000305" key="4">
    <source>
    </source>
</evidence>
<accession>P58415</accession>
<organism>
    <name type="scientific">Methanocaldococcus jannaschii (strain ATCC 43067 / DSM 2661 / JAL-1 / JCM 10045 / NBRC 100440)</name>
    <name type="common">Methanococcus jannaschii</name>
    <dbReference type="NCBI Taxonomy" id="243232"/>
    <lineage>
        <taxon>Archaea</taxon>
        <taxon>Methanobacteriati</taxon>
        <taxon>Methanobacteriota</taxon>
        <taxon>Methanomada group</taxon>
        <taxon>Methanococci</taxon>
        <taxon>Methanococcales</taxon>
        <taxon>Methanocaldococcaceae</taxon>
        <taxon>Methanocaldococcus</taxon>
    </lineage>
</organism>
<gene>
    <name evidence="2" type="primary">comD</name>
    <name type="ordered locus">MJ0255.1</name>
</gene>
<protein>
    <recommendedName>
        <fullName evidence="2">Sulfopyruvate decarboxylase subunit alpha</fullName>
        <ecNumber evidence="1">4.1.1.79</ecNumber>
    </recommendedName>
</protein>